<name>FABH_PROMT</name>
<comment type="function">
    <text evidence="1">Catalyzes the condensation reaction of fatty acid synthesis by the addition to an acyl acceptor of two carbons from malonyl-ACP. Catalyzes the first condensation reaction which initiates fatty acid synthesis and may therefore play a role in governing the total rate of fatty acid production. Possesses both acetoacetyl-ACP synthase and acetyl transacylase activities. Its substrate specificity determines the biosynthesis of branched-chain and/or straight-chain of fatty acids.</text>
</comment>
<comment type="catalytic activity">
    <reaction evidence="1">
        <text>malonyl-[ACP] + acetyl-CoA + H(+) = 3-oxobutanoyl-[ACP] + CO2 + CoA</text>
        <dbReference type="Rhea" id="RHEA:12080"/>
        <dbReference type="Rhea" id="RHEA-COMP:9623"/>
        <dbReference type="Rhea" id="RHEA-COMP:9625"/>
        <dbReference type="ChEBI" id="CHEBI:15378"/>
        <dbReference type="ChEBI" id="CHEBI:16526"/>
        <dbReference type="ChEBI" id="CHEBI:57287"/>
        <dbReference type="ChEBI" id="CHEBI:57288"/>
        <dbReference type="ChEBI" id="CHEBI:78449"/>
        <dbReference type="ChEBI" id="CHEBI:78450"/>
        <dbReference type="EC" id="2.3.1.180"/>
    </reaction>
</comment>
<comment type="pathway">
    <text evidence="1">Lipid metabolism; fatty acid biosynthesis.</text>
</comment>
<comment type="subunit">
    <text evidence="1">Homodimer.</text>
</comment>
<comment type="subcellular location">
    <subcellularLocation>
        <location evidence="1">Cytoplasm</location>
    </subcellularLocation>
</comment>
<comment type="domain">
    <text evidence="1">The last Arg residue of the ACP-binding site is essential for the weak association between ACP/AcpP and FabH.</text>
</comment>
<comment type="similarity">
    <text evidence="1">Belongs to the thiolase-like superfamily. FabH family.</text>
</comment>
<feature type="chain" id="PRO_1000056391" description="Beta-ketoacyl-[acyl-carrier-protein] synthase III">
    <location>
        <begin position="1"/>
        <end position="338"/>
    </location>
</feature>
<feature type="region of interest" description="ACP-binding" evidence="1">
    <location>
        <begin position="262"/>
        <end position="266"/>
    </location>
</feature>
<feature type="active site" evidence="1">
    <location>
        <position position="119"/>
    </location>
</feature>
<feature type="active site" evidence="1">
    <location>
        <position position="261"/>
    </location>
</feature>
<feature type="active site" evidence="1">
    <location>
        <position position="291"/>
    </location>
</feature>
<keyword id="KW-0012">Acyltransferase</keyword>
<keyword id="KW-0963">Cytoplasm</keyword>
<keyword id="KW-0275">Fatty acid biosynthesis</keyword>
<keyword id="KW-0276">Fatty acid metabolism</keyword>
<keyword id="KW-0444">Lipid biosynthesis</keyword>
<keyword id="KW-0443">Lipid metabolism</keyword>
<keyword id="KW-0511">Multifunctional enzyme</keyword>
<keyword id="KW-1185">Reference proteome</keyword>
<keyword id="KW-0808">Transferase</keyword>
<dbReference type="EC" id="2.3.1.180" evidence="1"/>
<dbReference type="EMBL" id="CP000095">
    <property type="protein sequence ID" value="AAZ58990.1"/>
    <property type="molecule type" value="Genomic_DNA"/>
</dbReference>
<dbReference type="RefSeq" id="WP_011294135.1">
    <property type="nucleotide sequence ID" value="NC_007335.2"/>
</dbReference>
<dbReference type="SMR" id="Q46HN8"/>
<dbReference type="STRING" id="59920.PMN2A_1502"/>
<dbReference type="KEGG" id="pmn:PMN2A_1502"/>
<dbReference type="HOGENOM" id="CLU_039592_0_1_3"/>
<dbReference type="OrthoDB" id="9815506at2"/>
<dbReference type="PhylomeDB" id="Q46HN8"/>
<dbReference type="UniPathway" id="UPA00094"/>
<dbReference type="Proteomes" id="UP000002535">
    <property type="component" value="Chromosome"/>
</dbReference>
<dbReference type="GO" id="GO:0005737">
    <property type="term" value="C:cytoplasm"/>
    <property type="evidence" value="ECO:0007669"/>
    <property type="project" value="UniProtKB-SubCell"/>
</dbReference>
<dbReference type="GO" id="GO:0004315">
    <property type="term" value="F:3-oxoacyl-[acyl-carrier-protein] synthase activity"/>
    <property type="evidence" value="ECO:0007669"/>
    <property type="project" value="InterPro"/>
</dbReference>
<dbReference type="GO" id="GO:0033818">
    <property type="term" value="F:beta-ketoacyl-acyl-carrier-protein synthase III activity"/>
    <property type="evidence" value="ECO:0007669"/>
    <property type="project" value="UniProtKB-UniRule"/>
</dbReference>
<dbReference type="GO" id="GO:0006633">
    <property type="term" value="P:fatty acid biosynthetic process"/>
    <property type="evidence" value="ECO:0007669"/>
    <property type="project" value="UniProtKB-UniRule"/>
</dbReference>
<dbReference type="CDD" id="cd00830">
    <property type="entry name" value="KAS_III"/>
    <property type="match status" value="1"/>
</dbReference>
<dbReference type="FunFam" id="3.40.47.10:FF:000004">
    <property type="entry name" value="3-oxoacyl-[acyl-carrier-protein] synthase 3"/>
    <property type="match status" value="1"/>
</dbReference>
<dbReference type="Gene3D" id="3.40.47.10">
    <property type="match status" value="1"/>
</dbReference>
<dbReference type="HAMAP" id="MF_01815">
    <property type="entry name" value="FabH"/>
    <property type="match status" value="1"/>
</dbReference>
<dbReference type="InterPro" id="IPR013747">
    <property type="entry name" value="ACP_syn_III_C"/>
</dbReference>
<dbReference type="InterPro" id="IPR013751">
    <property type="entry name" value="ACP_syn_III_N"/>
</dbReference>
<dbReference type="InterPro" id="IPR004655">
    <property type="entry name" value="FabH"/>
</dbReference>
<dbReference type="InterPro" id="IPR016039">
    <property type="entry name" value="Thiolase-like"/>
</dbReference>
<dbReference type="NCBIfam" id="TIGR00747">
    <property type="entry name" value="fabH"/>
    <property type="match status" value="1"/>
</dbReference>
<dbReference type="NCBIfam" id="NF006829">
    <property type="entry name" value="PRK09352.1"/>
    <property type="match status" value="1"/>
</dbReference>
<dbReference type="PANTHER" id="PTHR43091">
    <property type="entry name" value="3-OXOACYL-[ACYL-CARRIER-PROTEIN] SYNTHASE"/>
    <property type="match status" value="1"/>
</dbReference>
<dbReference type="PANTHER" id="PTHR43091:SF1">
    <property type="entry name" value="BETA-KETOACYL-[ACYL-CARRIER-PROTEIN] SYNTHASE III, CHLOROPLASTIC"/>
    <property type="match status" value="1"/>
</dbReference>
<dbReference type="Pfam" id="PF08545">
    <property type="entry name" value="ACP_syn_III"/>
    <property type="match status" value="1"/>
</dbReference>
<dbReference type="Pfam" id="PF08541">
    <property type="entry name" value="ACP_syn_III_C"/>
    <property type="match status" value="1"/>
</dbReference>
<dbReference type="SUPFAM" id="SSF53901">
    <property type="entry name" value="Thiolase-like"/>
    <property type="match status" value="1"/>
</dbReference>
<organism>
    <name type="scientific">Prochlorococcus marinus (strain NATL2A)</name>
    <dbReference type="NCBI Taxonomy" id="59920"/>
    <lineage>
        <taxon>Bacteria</taxon>
        <taxon>Bacillati</taxon>
        <taxon>Cyanobacteriota</taxon>
        <taxon>Cyanophyceae</taxon>
        <taxon>Synechococcales</taxon>
        <taxon>Prochlorococcaceae</taxon>
        <taxon>Prochlorococcus</taxon>
    </lineage>
</organism>
<evidence type="ECO:0000255" key="1">
    <source>
        <dbReference type="HAMAP-Rule" id="MF_01815"/>
    </source>
</evidence>
<proteinExistence type="inferred from homology"/>
<sequence length="338" mass="36349">MISNSQLDLGISFVGSGSATPQKIIKNDQLGQRVDTNDEWIQTRTGIGQRRVIGENESLIDLATDAAVNAVKMADWDVQTIDLIILATSTPEDLFGSAPKIQSNLGASNAVAFDLTAACSGFLFALVTASQYLASGSMKRALVIGADQLSKWVDWDDRKTCVLFGDGAGAVALESSGDESGLIGYDLKSDGSKGGCLNLSQSNVFLDLVQGANHQKGEYLPIKMEGKEVYKFAVKEVPIILGEILEKCQIKSESIDWLLLHQANQRILDAVASRFSIPSEKVLSNLKYYGNTSAATIPLMLDEAVRDKRIKSGDLIACSGFGAGLSWGAALFYWHGPY</sequence>
<gene>
    <name evidence="1" type="primary">fabH</name>
    <name type="ordered locus">PMN2A_1502</name>
</gene>
<accession>Q46HN8</accession>
<reference key="1">
    <citation type="journal article" date="2007" name="PLoS Genet.">
        <title>Patterns and implications of gene gain and loss in the evolution of Prochlorococcus.</title>
        <authorList>
            <person name="Kettler G.C."/>
            <person name="Martiny A.C."/>
            <person name="Huang K."/>
            <person name="Zucker J."/>
            <person name="Coleman M.L."/>
            <person name="Rodrigue S."/>
            <person name="Chen F."/>
            <person name="Lapidus A."/>
            <person name="Ferriera S."/>
            <person name="Johnson J."/>
            <person name="Steglich C."/>
            <person name="Church G.M."/>
            <person name="Richardson P."/>
            <person name="Chisholm S.W."/>
        </authorList>
    </citation>
    <scope>NUCLEOTIDE SEQUENCE [LARGE SCALE GENOMIC DNA]</scope>
    <source>
        <strain>NATL2A</strain>
    </source>
</reference>
<protein>
    <recommendedName>
        <fullName evidence="1">Beta-ketoacyl-[acyl-carrier-protein] synthase III</fullName>
        <shortName evidence="1">Beta-ketoacyl-ACP synthase III</shortName>
        <shortName evidence="1">KAS III</shortName>
        <ecNumber evidence="1">2.3.1.180</ecNumber>
    </recommendedName>
    <alternativeName>
        <fullName evidence="1">3-oxoacyl-[acyl-carrier-protein] synthase 3</fullName>
    </alternativeName>
    <alternativeName>
        <fullName evidence="1">3-oxoacyl-[acyl-carrier-protein] synthase III</fullName>
    </alternativeName>
</protein>